<organism>
    <name type="scientific">Escherichia coli (strain SE11)</name>
    <dbReference type="NCBI Taxonomy" id="409438"/>
    <lineage>
        <taxon>Bacteria</taxon>
        <taxon>Pseudomonadati</taxon>
        <taxon>Pseudomonadota</taxon>
        <taxon>Gammaproteobacteria</taxon>
        <taxon>Enterobacterales</taxon>
        <taxon>Enterobacteriaceae</taxon>
        <taxon>Escherichia</taxon>
    </lineage>
</organism>
<keyword id="KW-0233">DNA recombination</keyword>
<keyword id="KW-0238">DNA-binding</keyword>
<keyword id="KW-0804">Transcription</keyword>
<keyword id="KW-0805">Transcription regulation</keyword>
<keyword id="KW-0810">Translation regulation</keyword>
<accession>B6I8Y4</accession>
<name>IHFB_ECOSE</name>
<gene>
    <name evidence="1" type="primary">ihfB</name>
    <name evidence="1" type="synonym">himD</name>
    <name type="ordered locus">ECSE_0971</name>
</gene>
<comment type="function">
    <text evidence="1">This protein is one of the two subunits of integration host factor, a specific DNA-binding protein that functions in genetic recombination as well as in transcriptional and translational control.</text>
</comment>
<comment type="subunit">
    <text evidence="1">Heterodimer of an alpha and a beta chain.</text>
</comment>
<comment type="similarity">
    <text evidence="1">Belongs to the bacterial histone-like protein family.</text>
</comment>
<sequence>MTKSELIERLATQQSHIPAKTVEDAVKEMLEHMASTLAQGERIEIRGFGSFSLHYRAPRTGRNPKTGDKVELEGKYVPHFKPGKELRDRANIYG</sequence>
<evidence type="ECO:0000255" key="1">
    <source>
        <dbReference type="HAMAP-Rule" id="MF_00381"/>
    </source>
</evidence>
<feature type="chain" id="PRO_1000122215" description="Integration host factor subunit beta">
    <location>
        <begin position="1"/>
        <end position="94"/>
    </location>
</feature>
<proteinExistence type="inferred from homology"/>
<protein>
    <recommendedName>
        <fullName evidence="1">Integration host factor subunit beta</fullName>
        <shortName evidence="1">IHF-beta</shortName>
    </recommendedName>
</protein>
<reference key="1">
    <citation type="journal article" date="2008" name="DNA Res.">
        <title>Complete genome sequence and comparative analysis of the wild-type commensal Escherichia coli strain SE11 isolated from a healthy adult.</title>
        <authorList>
            <person name="Oshima K."/>
            <person name="Toh H."/>
            <person name="Ogura Y."/>
            <person name="Sasamoto H."/>
            <person name="Morita H."/>
            <person name="Park S.-H."/>
            <person name="Ooka T."/>
            <person name="Iyoda S."/>
            <person name="Taylor T.D."/>
            <person name="Hayashi T."/>
            <person name="Itoh K."/>
            <person name="Hattori M."/>
        </authorList>
    </citation>
    <scope>NUCLEOTIDE SEQUENCE [LARGE SCALE GENOMIC DNA]</scope>
    <source>
        <strain>SE11</strain>
    </source>
</reference>
<dbReference type="EMBL" id="AP009240">
    <property type="protein sequence ID" value="BAG76495.1"/>
    <property type="molecule type" value="Genomic_DNA"/>
</dbReference>
<dbReference type="RefSeq" id="WP_000167336.1">
    <property type="nucleotide sequence ID" value="NC_011415.1"/>
</dbReference>
<dbReference type="SMR" id="B6I8Y4"/>
<dbReference type="GeneID" id="93776505"/>
<dbReference type="KEGG" id="ecy:ECSE_0971"/>
<dbReference type="HOGENOM" id="CLU_105066_2_0_6"/>
<dbReference type="Proteomes" id="UP000008199">
    <property type="component" value="Chromosome"/>
</dbReference>
<dbReference type="GO" id="GO:0005694">
    <property type="term" value="C:chromosome"/>
    <property type="evidence" value="ECO:0007669"/>
    <property type="project" value="InterPro"/>
</dbReference>
<dbReference type="GO" id="GO:0005829">
    <property type="term" value="C:cytosol"/>
    <property type="evidence" value="ECO:0007669"/>
    <property type="project" value="TreeGrafter"/>
</dbReference>
<dbReference type="GO" id="GO:0003677">
    <property type="term" value="F:DNA binding"/>
    <property type="evidence" value="ECO:0007669"/>
    <property type="project" value="UniProtKB-UniRule"/>
</dbReference>
<dbReference type="GO" id="GO:0030527">
    <property type="term" value="F:structural constituent of chromatin"/>
    <property type="evidence" value="ECO:0007669"/>
    <property type="project" value="InterPro"/>
</dbReference>
<dbReference type="GO" id="GO:0006310">
    <property type="term" value="P:DNA recombination"/>
    <property type="evidence" value="ECO:0007669"/>
    <property type="project" value="UniProtKB-UniRule"/>
</dbReference>
<dbReference type="GO" id="GO:0006355">
    <property type="term" value="P:regulation of DNA-templated transcription"/>
    <property type="evidence" value="ECO:0007669"/>
    <property type="project" value="UniProtKB-UniRule"/>
</dbReference>
<dbReference type="GO" id="GO:0006417">
    <property type="term" value="P:regulation of translation"/>
    <property type="evidence" value="ECO:0007669"/>
    <property type="project" value="UniProtKB-UniRule"/>
</dbReference>
<dbReference type="CDD" id="cd13836">
    <property type="entry name" value="IHF_B"/>
    <property type="match status" value="1"/>
</dbReference>
<dbReference type="FunFam" id="4.10.520.10:FF:000003">
    <property type="entry name" value="Integration host factor subunit beta"/>
    <property type="match status" value="1"/>
</dbReference>
<dbReference type="Gene3D" id="4.10.520.10">
    <property type="entry name" value="IHF-like DNA-binding proteins"/>
    <property type="match status" value="1"/>
</dbReference>
<dbReference type="HAMAP" id="MF_00381">
    <property type="entry name" value="IHF_beta"/>
    <property type="match status" value="1"/>
</dbReference>
<dbReference type="InterPro" id="IPR000119">
    <property type="entry name" value="Hist_DNA-bd"/>
</dbReference>
<dbReference type="InterPro" id="IPR020816">
    <property type="entry name" value="Histone-like_DNA-bd_CS"/>
</dbReference>
<dbReference type="InterPro" id="IPR010992">
    <property type="entry name" value="IHF-like_DNA-bd_dom_sf"/>
</dbReference>
<dbReference type="InterPro" id="IPR005685">
    <property type="entry name" value="IHF_beta"/>
</dbReference>
<dbReference type="NCBIfam" id="TIGR00988">
    <property type="entry name" value="hip"/>
    <property type="match status" value="1"/>
</dbReference>
<dbReference type="NCBIfam" id="NF001222">
    <property type="entry name" value="PRK00199.1"/>
    <property type="match status" value="1"/>
</dbReference>
<dbReference type="PANTHER" id="PTHR33175">
    <property type="entry name" value="DNA-BINDING PROTEIN HU"/>
    <property type="match status" value="1"/>
</dbReference>
<dbReference type="PANTHER" id="PTHR33175:SF5">
    <property type="entry name" value="INTEGRATION HOST FACTOR SUBUNIT BETA"/>
    <property type="match status" value="1"/>
</dbReference>
<dbReference type="Pfam" id="PF00216">
    <property type="entry name" value="Bac_DNA_binding"/>
    <property type="match status" value="1"/>
</dbReference>
<dbReference type="PRINTS" id="PR01727">
    <property type="entry name" value="DNABINDINGHU"/>
</dbReference>
<dbReference type="SMART" id="SM00411">
    <property type="entry name" value="BHL"/>
    <property type="match status" value="1"/>
</dbReference>
<dbReference type="SUPFAM" id="SSF47729">
    <property type="entry name" value="IHF-like DNA-binding proteins"/>
    <property type="match status" value="1"/>
</dbReference>
<dbReference type="PROSITE" id="PS00045">
    <property type="entry name" value="HISTONE_LIKE"/>
    <property type="match status" value="1"/>
</dbReference>